<gene>
    <name evidence="1" type="primary">mnmA</name>
    <name type="synonym">trmU</name>
    <name type="ordered locus">spr0122</name>
</gene>
<accession>Q8CWW0</accession>
<keyword id="KW-0067">ATP-binding</keyword>
<keyword id="KW-0963">Cytoplasm</keyword>
<keyword id="KW-1015">Disulfide bond</keyword>
<keyword id="KW-0547">Nucleotide-binding</keyword>
<keyword id="KW-1185">Reference proteome</keyword>
<keyword id="KW-0694">RNA-binding</keyword>
<keyword id="KW-0808">Transferase</keyword>
<keyword id="KW-0819">tRNA processing</keyword>
<keyword id="KW-0820">tRNA-binding</keyword>
<comment type="function">
    <text evidence="1">Catalyzes the 2-thiolation of uridine at the wobble position (U34) of tRNA, leading to the formation of s(2)U34.</text>
</comment>
<comment type="catalytic activity">
    <reaction evidence="1">
        <text>S-sulfanyl-L-cysteinyl-[protein] + uridine(34) in tRNA + AH2 + ATP = 2-thiouridine(34) in tRNA + L-cysteinyl-[protein] + A + AMP + diphosphate + H(+)</text>
        <dbReference type="Rhea" id="RHEA:47032"/>
        <dbReference type="Rhea" id="RHEA-COMP:10131"/>
        <dbReference type="Rhea" id="RHEA-COMP:11726"/>
        <dbReference type="Rhea" id="RHEA-COMP:11727"/>
        <dbReference type="Rhea" id="RHEA-COMP:11728"/>
        <dbReference type="ChEBI" id="CHEBI:13193"/>
        <dbReference type="ChEBI" id="CHEBI:15378"/>
        <dbReference type="ChEBI" id="CHEBI:17499"/>
        <dbReference type="ChEBI" id="CHEBI:29950"/>
        <dbReference type="ChEBI" id="CHEBI:30616"/>
        <dbReference type="ChEBI" id="CHEBI:33019"/>
        <dbReference type="ChEBI" id="CHEBI:61963"/>
        <dbReference type="ChEBI" id="CHEBI:65315"/>
        <dbReference type="ChEBI" id="CHEBI:87170"/>
        <dbReference type="ChEBI" id="CHEBI:456215"/>
        <dbReference type="EC" id="2.8.1.13"/>
    </reaction>
</comment>
<comment type="subcellular location">
    <subcellularLocation>
        <location evidence="1">Cytoplasm</location>
    </subcellularLocation>
</comment>
<comment type="similarity">
    <text evidence="1">Belongs to the MnmA/TRMU family.</text>
</comment>
<comment type="sequence caution" evidence="2">
    <conflict type="erroneous initiation">
        <sequence resource="EMBL-CDS" id="AAK98926"/>
    </conflict>
</comment>
<dbReference type="EC" id="2.8.1.13" evidence="1"/>
<dbReference type="EMBL" id="AE007317">
    <property type="protein sequence ID" value="AAK98926.1"/>
    <property type="status" value="ALT_INIT"/>
    <property type="molecule type" value="Genomic_DNA"/>
</dbReference>
<dbReference type="PIR" id="B97887">
    <property type="entry name" value="B97887"/>
</dbReference>
<dbReference type="RefSeq" id="NP_357716.1">
    <property type="nucleotide sequence ID" value="NC_003098.1"/>
</dbReference>
<dbReference type="RefSeq" id="WP_001282986.1">
    <property type="nucleotide sequence ID" value="NC_003098.1"/>
</dbReference>
<dbReference type="SMR" id="Q8CWW0"/>
<dbReference type="STRING" id="171101.spr0122"/>
<dbReference type="KEGG" id="spr:spr0122"/>
<dbReference type="PATRIC" id="fig|171101.6.peg.140"/>
<dbReference type="eggNOG" id="COG0482">
    <property type="taxonomic scope" value="Bacteria"/>
</dbReference>
<dbReference type="HOGENOM" id="CLU_035188_1_0_9"/>
<dbReference type="Proteomes" id="UP000000586">
    <property type="component" value="Chromosome"/>
</dbReference>
<dbReference type="GO" id="GO:0005737">
    <property type="term" value="C:cytoplasm"/>
    <property type="evidence" value="ECO:0007669"/>
    <property type="project" value="UniProtKB-SubCell"/>
</dbReference>
<dbReference type="GO" id="GO:0005524">
    <property type="term" value="F:ATP binding"/>
    <property type="evidence" value="ECO:0007669"/>
    <property type="project" value="UniProtKB-KW"/>
</dbReference>
<dbReference type="GO" id="GO:0000049">
    <property type="term" value="F:tRNA binding"/>
    <property type="evidence" value="ECO:0007669"/>
    <property type="project" value="UniProtKB-KW"/>
</dbReference>
<dbReference type="GO" id="GO:0103016">
    <property type="term" value="F:tRNA-uridine 2-sulfurtransferase activity"/>
    <property type="evidence" value="ECO:0007669"/>
    <property type="project" value="UniProtKB-EC"/>
</dbReference>
<dbReference type="GO" id="GO:0002143">
    <property type="term" value="P:tRNA wobble position uridine thiolation"/>
    <property type="evidence" value="ECO:0000318"/>
    <property type="project" value="GO_Central"/>
</dbReference>
<dbReference type="CDD" id="cd01998">
    <property type="entry name" value="MnmA_TRMU-like"/>
    <property type="match status" value="1"/>
</dbReference>
<dbReference type="FunFam" id="2.30.30.280:FF:000001">
    <property type="entry name" value="tRNA-specific 2-thiouridylase MnmA"/>
    <property type="match status" value="1"/>
</dbReference>
<dbReference type="FunFam" id="2.40.30.10:FF:000023">
    <property type="entry name" value="tRNA-specific 2-thiouridylase MnmA"/>
    <property type="match status" value="1"/>
</dbReference>
<dbReference type="FunFam" id="3.40.50.620:FF:000004">
    <property type="entry name" value="tRNA-specific 2-thiouridylase MnmA"/>
    <property type="match status" value="1"/>
</dbReference>
<dbReference type="Gene3D" id="2.30.30.280">
    <property type="entry name" value="Adenine nucleotide alpha hydrolases-like domains"/>
    <property type="match status" value="1"/>
</dbReference>
<dbReference type="Gene3D" id="3.40.50.620">
    <property type="entry name" value="HUPs"/>
    <property type="match status" value="1"/>
</dbReference>
<dbReference type="Gene3D" id="2.40.30.10">
    <property type="entry name" value="Translation factors"/>
    <property type="match status" value="1"/>
</dbReference>
<dbReference type="HAMAP" id="MF_00144">
    <property type="entry name" value="tRNA_thiouridyl_MnmA"/>
    <property type="match status" value="1"/>
</dbReference>
<dbReference type="InterPro" id="IPR004506">
    <property type="entry name" value="MnmA-like"/>
</dbReference>
<dbReference type="InterPro" id="IPR046885">
    <property type="entry name" value="MnmA-like_C"/>
</dbReference>
<dbReference type="InterPro" id="IPR046884">
    <property type="entry name" value="MnmA-like_central"/>
</dbReference>
<dbReference type="InterPro" id="IPR023382">
    <property type="entry name" value="MnmA-like_central_sf"/>
</dbReference>
<dbReference type="InterPro" id="IPR014729">
    <property type="entry name" value="Rossmann-like_a/b/a_fold"/>
</dbReference>
<dbReference type="NCBIfam" id="NF001138">
    <property type="entry name" value="PRK00143.1"/>
    <property type="match status" value="1"/>
</dbReference>
<dbReference type="NCBIfam" id="TIGR00420">
    <property type="entry name" value="trmU"/>
    <property type="match status" value="1"/>
</dbReference>
<dbReference type="PANTHER" id="PTHR11933:SF5">
    <property type="entry name" value="MITOCHONDRIAL TRNA-SPECIFIC 2-THIOURIDYLASE 1"/>
    <property type="match status" value="1"/>
</dbReference>
<dbReference type="PANTHER" id="PTHR11933">
    <property type="entry name" value="TRNA 5-METHYLAMINOMETHYL-2-THIOURIDYLATE -METHYLTRANSFERASE"/>
    <property type="match status" value="1"/>
</dbReference>
<dbReference type="Pfam" id="PF03054">
    <property type="entry name" value="tRNA_Me_trans"/>
    <property type="match status" value="1"/>
</dbReference>
<dbReference type="Pfam" id="PF20258">
    <property type="entry name" value="tRNA_Me_trans_C"/>
    <property type="match status" value="1"/>
</dbReference>
<dbReference type="Pfam" id="PF20259">
    <property type="entry name" value="tRNA_Me_trans_M"/>
    <property type="match status" value="1"/>
</dbReference>
<dbReference type="SUPFAM" id="SSF52402">
    <property type="entry name" value="Adenine nucleotide alpha hydrolases-like"/>
    <property type="match status" value="1"/>
</dbReference>
<feature type="chain" id="PRO_0000121686" description="tRNA-specific 2-thiouridylase MnmA">
    <location>
        <begin position="1"/>
        <end position="373"/>
    </location>
</feature>
<feature type="region of interest" description="Interaction with target base in tRNA" evidence="1">
    <location>
        <begin position="98"/>
        <end position="100"/>
    </location>
</feature>
<feature type="region of interest" description="Interaction with tRNA" evidence="1">
    <location>
        <begin position="150"/>
        <end position="152"/>
    </location>
</feature>
<feature type="region of interest" description="Interaction with tRNA" evidence="1">
    <location>
        <begin position="312"/>
        <end position="313"/>
    </location>
</feature>
<feature type="active site" description="Nucleophile" evidence="1">
    <location>
        <position position="103"/>
    </location>
</feature>
<feature type="active site" description="Cysteine persulfide intermediate" evidence="1">
    <location>
        <position position="200"/>
    </location>
</feature>
<feature type="binding site" evidence="1">
    <location>
        <begin position="12"/>
        <end position="19"/>
    </location>
    <ligand>
        <name>ATP</name>
        <dbReference type="ChEBI" id="CHEBI:30616"/>
    </ligand>
</feature>
<feature type="binding site" evidence="1">
    <location>
        <position position="38"/>
    </location>
    <ligand>
        <name>ATP</name>
        <dbReference type="ChEBI" id="CHEBI:30616"/>
    </ligand>
</feature>
<feature type="binding site" evidence="1">
    <location>
        <position position="127"/>
    </location>
    <ligand>
        <name>ATP</name>
        <dbReference type="ChEBI" id="CHEBI:30616"/>
    </ligand>
</feature>
<feature type="site" description="Interaction with tRNA" evidence="1">
    <location>
        <position position="128"/>
    </location>
</feature>
<feature type="site" description="Interaction with tRNA" evidence="1">
    <location>
        <position position="344"/>
    </location>
</feature>
<feature type="disulfide bond" description="Alternate" evidence="1">
    <location>
        <begin position="103"/>
        <end position="200"/>
    </location>
</feature>
<reference key="1">
    <citation type="journal article" date="2001" name="J. Bacteriol.">
        <title>Genome of the bacterium Streptococcus pneumoniae strain R6.</title>
        <authorList>
            <person name="Hoskins J."/>
            <person name="Alborn W.E. Jr."/>
            <person name="Arnold J."/>
            <person name="Blaszczak L.C."/>
            <person name="Burgett S."/>
            <person name="DeHoff B.S."/>
            <person name="Estrem S.T."/>
            <person name="Fritz L."/>
            <person name="Fu D.-J."/>
            <person name="Fuller W."/>
            <person name="Geringer C."/>
            <person name="Gilmour R."/>
            <person name="Glass J.S."/>
            <person name="Khoja H."/>
            <person name="Kraft A.R."/>
            <person name="Lagace R.E."/>
            <person name="LeBlanc D.J."/>
            <person name="Lee L.N."/>
            <person name="Lefkowitz E.J."/>
            <person name="Lu J."/>
            <person name="Matsushima P."/>
            <person name="McAhren S.M."/>
            <person name="McHenney M."/>
            <person name="McLeaster K."/>
            <person name="Mundy C.W."/>
            <person name="Nicas T.I."/>
            <person name="Norris F.H."/>
            <person name="O'Gara M."/>
            <person name="Peery R.B."/>
            <person name="Robertson G.T."/>
            <person name="Rockey P."/>
            <person name="Sun P.-M."/>
            <person name="Winkler M.E."/>
            <person name="Yang Y."/>
            <person name="Young-Bellido M."/>
            <person name="Zhao G."/>
            <person name="Zook C.A."/>
            <person name="Baltz R.H."/>
            <person name="Jaskunas S.R."/>
            <person name="Rosteck P.R. Jr."/>
            <person name="Skatrud P.L."/>
            <person name="Glass J.I."/>
        </authorList>
    </citation>
    <scope>NUCLEOTIDE SEQUENCE [LARGE SCALE GENOMIC DNA]</scope>
    <source>
        <strain>ATCC BAA-255 / R6</strain>
    </source>
</reference>
<name>MNMA_STRR6</name>
<proteinExistence type="inferred from homology"/>
<organism>
    <name type="scientific">Streptococcus pneumoniae (strain ATCC BAA-255 / R6)</name>
    <dbReference type="NCBI Taxonomy" id="171101"/>
    <lineage>
        <taxon>Bacteria</taxon>
        <taxon>Bacillati</taxon>
        <taxon>Bacillota</taxon>
        <taxon>Bacilli</taxon>
        <taxon>Lactobacillales</taxon>
        <taxon>Streptococcaceae</taxon>
        <taxon>Streptococcus</taxon>
    </lineage>
</organism>
<evidence type="ECO:0000255" key="1">
    <source>
        <dbReference type="HAMAP-Rule" id="MF_00144"/>
    </source>
</evidence>
<evidence type="ECO:0000305" key="2"/>
<protein>
    <recommendedName>
        <fullName evidence="1">tRNA-specific 2-thiouridylase MnmA</fullName>
        <ecNumber evidence="1">2.8.1.13</ecNumber>
    </recommendedName>
</protein>
<sequence length="373" mass="41627">MSDNSKTRVVVGMSGGVDSSVTALLLKEQGYDVIGIFMKNWDDTDENGVCTATEDYKDVVAVADQIGIPYYSVNFEKEYWDRVFEYFLAEYRAGRTPNPDVMCNKEIKFKAFLDYAMTLGADYVATGHYARVARDEDGTVHMLRGVDNGKDQTYFLSQLSQEQLQKTMFPLGHLKKPEVRKLAEEAGLSTAKKKDSTGICFIGEKNFKNFLSNYLPAQPGRMMTVDGRDMGEHAGLMYYTIGQRGGLGIGGQHGGDNAPWFVVGKDLSKNILYVGQGFYHDSLMSTSLEASQVHFTREMPEEFTLECTAKFRYRQPDSKVTVHVKGDKAEVIFAEPQRAITPGQAVVFYDGEECLGGGLIDNAYRDGQVCQYI</sequence>